<name>RS4_CHLT2</name>
<reference key="1">
    <citation type="journal article" date="2008" name="Genome Res.">
        <title>Chlamydia trachomatis: genome sequence analysis of lymphogranuloma venereum isolates.</title>
        <authorList>
            <person name="Thomson N.R."/>
            <person name="Holden M.T.G."/>
            <person name="Carder C."/>
            <person name="Lennard N."/>
            <person name="Lockey S.J."/>
            <person name="Marsh P."/>
            <person name="Skipp P."/>
            <person name="O'Connor C.D."/>
            <person name="Goodhead I."/>
            <person name="Norbertzcak H."/>
            <person name="Harris B."/>
            <person name="Ormond D."/>
            <person name="Rance R."/>
            <person name="Quail M.A."/>
            <person name="Parkhill J."/>
            <person name="Stephens R.S."/>
            <person name="Clarke I.N."/>
        </authorList>
    </citation>
    <scope>NUCLEOTIDE SEQUENCE [LARGE SCALE GENOMIC DNA]</scope>
    <source>
        <strain>ATCC VR-902B / DSM 19102 / 434/Bu</strain>
    </source>
</reference>
<evidence type="ECO:0000255" key="1">
    <source>
        <dbReference type="HAMAP-Rule" id="MF_01306"/>
    </source>
</evidence>
<evidence type="ECO:0000256" key="2">
    <source>
        <dbReference type="SAM" id="MobiDB-lite"/>
    </source>
</evidence>
<evidence type="ECO:0000305" key="3"/>
<dbReference type="EMBL" id="AM884176">
    <property type="protein sequence ID" value="CAP04327.1"/>
    <property type="molecule type" value="Genomic_DNA"/>
</dbReference>
<dbReference type="RefSeq" id="WP_009873958.1">
    <property type="nucleotide sequence ID" value="NC_010287.1"/>
</dbReference>
<dbReference type="RefSeq" id="YP_001654959.1">
    <property type="nucleotide sequence ID" value="NC_010287.1"/>
</dbReference>
<dbReference type="SMR" id="B0B8K1"/>
<dbReference type="KEGG" id="ctb:CTL0890"/>
<dbReference type="PATRIC" id="fig|471472.4.peg.955"/>
<dbReference type="HOGENOM" id="CLU_092403_0_1_0"/>
<dbReference type="Proteomes" id="UP001154402">
    <property type="component" value="Chromosome"/>
</dbReference>
<dbReference type="GO" id="GO:0015935">
    <property type="term" value="C:small ribosomal subunit"/>
    <property type="evidence" value="ECO:0007669"/>
    <property type="project" value="InterPro"/>
</dbReference>
<dbReference type="GO" id="GO:0019843">
    <property type="term" value="F:rRNA binding"/>
    <property type="evidence" value="ECO:0007669"/>
    <property type="project" value="UniProtKB-UniRule"/>
</dbReference>
<dbReference type="GO" id="GO:0003735">
    <property type="term" value="F:structural constituent of ribosome"/>
    <property type="evidence" value="ECO:0007669"/>
    <property type="project" value="InterPro"/>
</dbReference>
<dbReference type="GO" id="GO:0042274">
    <property type="term" value="P:ribosomal small subunit biogenesis"/>
    <property type="evidence" value="ECO:0007669"/>
    <property type="project" value="TreeGrafter"/>
</dbReference>
<dbReference type="GO" id="GO:0006412">
    <property type="term" value="P:translation"/>
    <property type="evidence" value="ECO:0007669"/>
    <property type="project" value="UniProtKB-UniRule"/>
</dbReference>
<dbReference type="CDD" id="cd00165">
    <property type="entry name" value="S4"/>
    <property type="match status" value="1"/>
</dbReference>
<dbReference type="FunFam" id="3.10.290.10:FF:000001">
    <property type="entry name" value="30S ribosomal protein S4"/>
    <property type="match status" value="1"/>
</dbReference>
<dbReference type="Gene3D" id="1.10.1050.10">
    <property type="entry name" value="Ribosomal Protein S4 Delta 41, Chain A, domain 1"/>
    <property type="match status" value="1"/>
</dbReference>
<dbReference type="Gene3D" id="3.10.290.10">
    <property type="entry name" value="RNA-binding S4 domain"/>
    <property type="match status" value="1"/>
</dbReference>
<dbReference type="HAMAP" id="MF_01306_B">
    <property type="entry name" value="Ribosomal_uS4_B"/>
    <property type="match status" value="1"/>
</dbReference>
<dbReference type="InterPro" id="IPR022801">
    <property type="entry name" value="Ribosomal_uS4"/>
</dbReference>
<dbReference type="InterPro" id="IPR005709">
    <property type="entry name" value="Ribosomal_uS4_bac-type"/>
</dbReference>
<dbReference type="InterPro" id="IPR001912">
    <property type="entry name" value="Ribosomal_uS4_N"/>
</dbReference>
<dbReference type="InterPro" id="IPR002942">
    <property type="entry name" value="S4_RNA-bd"/>
</dbReference>
<dbReference type="InterPro" id="IPR036986">
    <property type="entry name" value="S4_RNA-bd_sf"/>
</dbReference>
<dbReference type="NCBIfam" id="NF003717">
    <property type="entry name" value="PRK05327.1"/>
    <property type="match status" value="1"/>
</dbReference>
<dbReference type="NCBIfam" id="TIGR01017">
    <property type="entry name" value="rpsD_bact"/>
    <property type="match status" value="1"/>
</dbReference>
<dbReference type="PANTHER" id="PTHR11831">
    <property type="entry name" value="30S 40S RIBOSOMAL PROTEIN"/>
    <property type="match status" value="1"/>
</dbReference>
<dbReference type="PANTHER" id="PTHR11831:SF4">
    <property type="entry name" value="SMALL RIBOSOMAL SUBUNIT PROTEIN US4M"/>
    <property type="match status" value="1"/>
</dbReference>
<dbReference type="Pfam" id="PF00163">
    <property type="entry name" value="Ribosomal_S4"/>
    <property type="match status" value="1"/>
</dbReference>
<dbReference type="Pfam" id="PF01479">
    <property type="entry name" value="S4"/>
    <property type="match status" value="1"/>
</dbReference>
<dbReference type="SMART" id="SM01390">
    <property type="entry name" value="Ribosomal_S4"/>
    <property type="match status" value="1"/>
</dbReference>
<dbReference type="SMART" id="SM00363">
    <property type="entry name" value="S4"/>
    <property type="match status" value="1"/>
</dbReference>
<dbReference type="SUPFAM" id="SSF55174">
    <property type="entry name" value="Alpha-L RNA-binding motif"/>
    <property type="match status" value="1"/>
</dbReference>
<dbReference type="PROSITE" id="PS50889">
    <property type="entry name" value="S4"/>
    <property type="match status" value="1"/>
</dbReference>
<accession>B0B8K1</accession>
<proteinExistence type="inferred from homology"/>
<protein>
    <recommendedName>
        <fullName evidence="1">Small ribosomal subunit protein uS4</fullName>
    </recommendedName>
    <alternativeName>
        <fullName evidence="3">30S ribosomal protein S4</fullName>
    </alternativeName>
</protein>
<feature type="chain" id="PRO_1000140706" description="Small ribosomal subunit protein uS4">
    <location>
        <begin position="1"/>
        <end position="209"/>
    </location>
</feature>
<feature type="domain" description="S4 RNA-binding" evidence="1">
    <location>
        <begin position="93"/>
        <end position="154"/>
    </location>
</feature>
<feature type="region of interest" description="Disordered" evidence="2">
    <location>
        <begin position="22"/>
        <end position="45"/>
    </location>
</feature>
<sequence>MARYCGPKNRIARRFGANIFGRGRNPLLRKPNPPGQHGMQRKKKSDYGLQLEEKQKLKACYGMILEKQLVKAYKEVVNKQGNVAQMFLEKFECRLDSIVYRLGFAKTIFAAQQLVSHGHVLVNGKKVDRRSFFVRPGMQISLKEKSKRLAIVTESLENKDQSSLPAYLSLDKAAFKGELVVAPELDQIASQLPLPVNVSVICEFLSHRT</sequence>
<gene>
    <name evidence="1" type="primary">rpsD</name>
    <name type="ordered locus">CTL0890</name>
</gene>
<organism>
    <name type="scientific">Chlamydia trachomatis serovar L2 (strain ATCC VR-902B / DSM 19102 / 434/Bu)</name>
    <dbReference type="NCBI Taxonomy" id="471472"/>
    <lineage>
        <taxon>Bacteria</taxon>
        <taxon>Pseudomonadati</taxon>
        <taxon>Chlamydiota</taxon>
        <taxon>Chlamydiia</taxon>
        <taxon>Chlamydiales</taxon>
        <taxon>Chlamydiaceae</taxon>
        <taxon>Chlamydia/Chlamydophila group</taxon>
        <taxon>Chlamydia</taxon>
    </lineage>
</organism>
<comment type="function">
    <text evidence="1">One of the primary rRNA binding proteins, it binds directly to 16S rRNA where it nucleates assembly of the body of the 30S subunit.</text>
</comment>
<comment type="function">
    <text evidence="1">With S5 and S12 plays an important role in translational accuracy.</text>
</comment>
<comment type="subunit">
    <text evidence="1">Part of the 30S ribosomal subunit. Contacts protein S5. The interaction surface between S4 and S5 is involved in control of translational fidelity.</text>
</comment>
<comment type="similarity">
    <text evidence="1">Belongs to the universal ribosomal protein uS4 family.</text>
</comment>
<keyword id="KW-0687">Ribonucleoprotein</keyword>
<keyword id="KW-0689">Ribosomal protein</keyword>
<keyword id="KW-0694">RNA-binding</keyword>
<keyword id="KW-0699">rRNA-binding</keyword>